<organism>
    <name type="scientific">Salmonella dublin</name>
    <dbReference type="NCBI Taxonomy" id="98360"/>
    <lineage>
        <taxon>Bacteria</taxon>
        <taxon>Pseudomonadati</taxon>
        <taxon>Pseudomonadota</taxon>
        <taxon>Gammaproteobacteria</taxon>
        <taxon>Enterobacterales</taxon>
        <taxon>Enterobacteriaceae</taxon>
        <taxon>Salmonella</taxon>
    </lineage>
</organism>
<feature type="chain" id="PRO_0000219871" description="Virulence-associated protein VagC">
    <location>
        <begin position="1"/>
        <end position="76"/>
    </location>
</feature>
<feature type="domain" description="SpoVT-AbrB" evidence="1">
    <location>
        <begin position="4"/>
        <end position="45"/>
    </location>
</feature>
<protein>
    <recommendedName>
        <fullName>Virulence-associated protein VagC</fullName>
    </recommendedName>
</protein>
<keyword id="KW-0238">DNA-binding</keyword>
<keyword id="KW-0614">Plasmid</keyword>
<keyword id="KW-0843">Virulence</keyword>
<gene>
    <name type="primary">vagC</name>
</gene>
<sequence>MRTVSIFKNGNNRAIRLPRDLDFEGVSELEIVREGDSIILRPVRPTWGSFAQLEKADPDFMAEREDVVSDEGRFEL</sequence>
<comment type="similarity">
    <text evidence="2">Belongs to the VapB family.</text>
</comment>
<comment type="sequence caution" evidence="2">
    <conflict type="erroneous initiation">
        <sequence resource="EMBL-CDS" id="CAA47368"/>
    </conflict>
    <text>Extended N-terminus.</text>
</comment>
<accession>Q05459</accession>
<name>VAGC_SALDU</name>
<evidence type="ECO:0000255" key="1">
    <source>
        <dbReference type="PROSITE-ProRule" id="PRU01076"/>
    </source>
</evidence>
<evidence type="ECO:0000305" key="2"/>
<geneLocation type="plasmid"/>
<dbReference type="EMBL" id="X66934">
    <property type="protein sequence ID" value="CAA47368.1"/>
    <property type="status" value="ALT_INIT"/>
    <property type="molecule type" value="Genomic_DNA"/>
</dbReference>
<dbReference type="PIR" id="S22685">
    <property type="entry name" value="S22685"/>
</dbReference>
<dbReference type="RefSeq" id="YP_001716127.1">
    <property type="nucleotide sequence ID" value="NC_010422.1"/>
</dbReference>
<dbReference type="RefSeq" id="YP_006954883.1">
    <property type="nucleotide sequence ID" value="NC_019106.1"/>
</dbReference>
<dbReference type="SMR" id="Q05459"/>
<dbReference type="GO" id="GO:0003677">
    <property type="term" value="F:DNA binding"/>
    <property type="evidence" value="ECO:0007669"/>
    <property type="project" value="UniProtKB-KW"/>
</dbReference>
<dbReference type="Gene3D" id="2.10.260.10">
    <property type="match status" value="1"/>
</dbReference>
<dbReference type="InterPro" id="IPR047976">
    <property type="entry name" value="Anti_VapB2-like"/>
</dbReference>
<dbReference type="InterPro" id="IPR007159">
    <property type="entry name" value="SpoVT-AbrB_dom"/>
</dbReference>
<dbReference type="InterPro" id="IPR037914">
    <property type="entry name" value="SpoVT-AbrB_sf"/>
</dbReference>
<dbReference type="InterPro" id="IPR051734">
    <property type="entry name" value="VapB_TA_antitoxins"/>
</dbReference>
<dbReference type="NCBIfam" id="NF040493">
    <property type="entry name" value="TA_anti_VapB"/>
    <property type="match status" value="1"/>
</dbReference>
<dbReference type="PANTHER" id="PTHR37550">
    <property type="entry name" value="ANTITOXIN VAPB1"/>
    <property type="match status" value="1"/>
</dbReference>
<dbReference type="PANTHER" id="PTHR37550:SF3">
    <property type="entry name" value="ANTITOXIN VAPB1"/>
    <property type="match status" value="1"/>
</dbReference>
<dbReference type="Pfam" id="PF04014">
    <property type="entry name" value="MazE_antitoxin"/>
    <property type="match status" value="1"/>
</dbReference>
<dbReference type="SMART" id="SM00966">
    <property type="entry name" value="SpoVT_AbrB"/>
    <property type="match status" value="1"/>
</dbReference>
<dbReference type="SUPFAM" id="SSF89447">
    <property type="entry name" value="AbrB/MazE/MraZ-like"/>
    <property type="match status" value="1"/>
</dbReference>
<dbReference type="PROSITE" id="PS51740">
    <property type="entry name" value="SPOVT_ABRB"/>
    <property type="match status" value="1"/>
</dbReference>
<reference key="1">
    <citation type="journal article" date="1992" name="Mol. Microbiol.">
        <title>A Salmonella dublin virulence plasmid locus that affects bacterial growth under nutrient-limited conditions.</title>
        <authorList>
            <person name="Pullinger G.D."/>
            <person name="Lax A.J."/>
        </authorList>
    </citation>
    <scope>NUCLEOTIDE SEQUENCE [GENOMIC DNA]</scope>
    <source>
        <strain>G19</strain>
    </source>
</reference>
<proteinExistence type="inferred from homology"/>